<feature type="chain" id="PRO_0000092766" description="Phosphate import ATP-binding protein PstB">
    <location>
        <begin position="1"/>
        <end position="291"/>
    </location>
</feature>
<feature type="domain" description="ABC transporter" evidence="1">
    <location>
        <begin position="43"/>
        <end position="286"/>
    </location>
</feature>
<feature type="binding site" evidence="1">
    <location>
        <begin position="75"/>
        <end position="82"/>
    </location>
    <ligand>
        <name>ATP</name>
        <dbReference type="ChEBI" id="CHEBI:30616"/>
    </ligand>
</feature>
<evidence type="ECO:0000255" key="1">
    <source>
        <dbReference type="HAMAP-Rule" id="MF_01702"/>
    </source>
</evidence>
<dbReference type="EC" id="7.3.2.1" evidence="1"/>
<dbReference type="EMBL" id="AY297781">
    <property type="protein sequence ID" value="AAS45095.1"/>
    <property type="molecule type" value="Genomic_DNA"/>
</dbReference>
<dbReference type="SMR" id="Q6WB51"/>
<dbReference type="GO" id="GO:0005886">
    <property type="term" value="C:plasma membrane"/>
    <property type="evidence" value="ECO:0007669"/>
    <property type="project" value="UniProtKB-SubCell"/>
</dbReference>
<dbReference type="GO" id="GO:0005524">
    <property type="term" value="F:ATP binding"/>
    <property type="evidence" value="ECO:0007669"/>
    <property type="project" value="UniProtKB-KW"/>
</dbReference>
<dbReference type="GO" id="GO:0016887">
    <property type="term" value="F:ATP hydrolysis activity"/>
    <property type="evidence" value="ECO:0007669"/>
    <property type="project" value="InterPro"/>
</dbReference>
<dbReference type="GO" id="GO:0015415">
    <property type="term" value="F:ATPase-coupled phosphate ion transmembrane transporter activity"/>
    <property type="evidence" value="ECO:0007669"/>
    <property type="project" value="UniProtKB-EC"/>
</dbReference>
<dbReference type="GO" id="GO:0035435">
    <property type="term" value="P:phosphate ion transmembrane transport"/>
    <property type="evidence" value="ECO:0007669"/>
    <property type="project" value="InterPro"/>
</dbReference>
<dbReference type="CDD" id="cd03260">
    <property type="entry name" value="ABC_PstB_phosphate_transporter"/>
    <property type="match status" value="1"/>
</dbReference>
<dbReference type="Gene3D" id="3.40.50.300">
    <property type="entry name" value="P-loop containing nucleotide triphosphate hydrolases"/>
    <property type="match status" value="1"/>
</dbReference>
<dbReference type="InterPro" id="IPR003593">
    <property type="entry name" value="AAA+_ATPase"/>
</dbReference>
<dbReference type="InterPro" id="IPR003439">
    <property type="entry name" value="ABC_transporter-like_ATP-bd"/>
</dbReference>
<dbReference type="InterPro" id="IPR017871">
    <property type="entry name" value="ABC_transporter-like_CS"/>
</dbReference>
<dbReference type="InterPro" id="IPR027417">
    <property type="entry name" value="P-loop_NTPase"/>
</dbReference>
<dbReference type="InterPro" id="IPR005670">
    <property type="entry name" value="PstB-like"/>
</dbReference>
<dbReference type="NCBIfam" id="TIGR00972">
    <property type="entry name" value="3a0107s01c2"/>
    <property type="match status" value="1"/>
</dbReference>
<dbReference type="PANTHER" id="PTHR43423">
    <property type="entry name" value="ABC TRANSPORTER I FAMILY MEMBER 17"/>
    <property type="match status" value="1"/>
</dbReference>
<dbReference type="PANTHER" id="PTHR43423:SF1">
    <property type="entry name" value="ABC TRANSPORTER I FAMILY MEMBER 17"/>
    <property type="match status" value="1"/>
</dbReference>
<dbReference type="Pfam" id="PF00005">
    <property type="entry name" value="ABC_tran"/>
    <property type="match status" value="1"/>
</dbReference>
<dbReference type="SMART" id="SM00382">
    <property type="entry name" value="AAA"/>
    <property type="match status" value="1"/>
</dbReference>
<dbReference type="SUPFAM" id="SSF52540">
    <property type="entry name" value="P-loop containing nucleoside triphosphate hydrolases"/>
    <property type="match status" value="1"/>
</dbReference>
<dbReference type="PROSITE" id="PS00211">
    <property type="entry name" value="ABC_TRANSPORTER_1"/>
    <property type="match status" value="1"/>
</dbReference>
<dbReference type="PROSITE" id="PS50893">
    <property type="entry name" value="ABC_TRANSPORTER_2"/>
    <property type="match status" value="1"/>
</dbReference>
<dbReference type="PROSITE" id="PS51238">
    <property type="entry name" value="PSTB"/>
    <property type="match status" value="1"/>
</dbReference>
<comment type="function">
    <text evidence="1">Part of the ABC transporter complex PstSACB involved in phosphate import. Responsible for energy coupling to the transport system.</text>
</comment>
<comment type="catalytic activity">
    <reaction evidence="1">
        <text>phosphate(out) + ATP + H2O = ADP + 2 phosphate(in) + H(+)</text>
        <dbReference type="Rhea" id="RHEA:24440"/>
        <dbReference type="ChEBI" id="CHEBI:15377"/>
        <dbReference type="ChEBI" id="CHEBI:15378"/>
        <dbReference type="ChEBI" id="CHEBI:30616"/>
        <dbReference type="ChEBI" id="CHEBI:43474"/>
        <dbReference type="ChEBI" id="CHEBI:456216"/>
        <dbReference type="EC" id="7.3.2.1"/>
    </reaction>
</comment>
<comment type="subunit">
    <text evidence="1">The complex is composed of two ATP-binding proteins (PstB), two transmembrane proteins (PstC and PstA) and a solute-binding protein (PstS).</text>
</comment>
<comment type="subcellular location">
    <subcellularLocation>
        <location evidence="1">Cell inner membrane</location>
        <topology evidence="1">Peripheral membrane protein</topology>
    </subcellularLocation>
</comment>
<comment type="similarity">
    <text evidence="1">Belongs to the ABC transporter superfamily. Phosphate importer (TC 3.A.1.7) family.</text>
</comment>
<organism>
    <name type="scientific">Alcaligenes faecalis</name>
    <dbReference type="NCBI Taxonomy" id="511"/>
    <lineage>
        <taxon>Bacteria</taxon>
        <taxon>Pseudomonadati</taxon>
        <taxon>Pseudomonadota</taxon>
        <taxon>Betaproteobacteria</taxon>
        <taxon>Burkholderiales</taxon>
        <taxon>Alcaligenaceae</taxon>
        <taxon>Alcaligenes</taxon>
    </lineage>
</organism>
<accession>Q6WB51</accession>
<protein>
    <recommendedName>
        <fullName evidence="1">Phosphate import ATP-binding protein PstB</fullName>
        <ecNumber evidence="1">7.3.2.1</ecNumber>
    </recommendedName>
    <alternativeName>
        <fullName evidence="1">ABC phosphate transporter</fullName>
    </alternativeName>
    <alternativeName>
        <fullName evidence="1">Phosphate-transporting ATPase</fullName>
    </alternativeName>
</protein>
<sequence length="291" mass="32721">MSDTTKPPMARKMGLTAERVHGERRVEDPSRSVMTPPKEELRANVKDLSFWYGEFQALHAVNLPIARNKVTALIGASGCGKSTLLRCFNRMHDLYPGNRYGGEIDLQPEGQNIIAPGIDPILIRLRIGMVFQKPNPFPKTIYENVASGLRIRGIRSRAVLDERVEVSLRQAALWDEVKDRLHQSAYGLSGGQQQRLCIARTLAPNPEIILFDEPTSALDPIATAKIEDLFTDLRDDYTIVIVTHNMQQAARISDYLAFMHLGKMIEFGPTDECFVKPKHAMTEEYITGRFG</sequence>
<proteinExistence type="inferred from homology"/>
<reference key="1">
    <citation type="submission" date="2003-04" db="EMBL/GenBank/DDBJ databases">
        <title>Genes for arsenite oxidation from Alcaligenes faecalis.</title>
        <authorList>
            <person name="Silver S."/>
            <person name="Phung L.T."/>
            <person name="Malo B.J."/>
        </authorList>
    </citation>
    <scope>NUCLEOTIDE SEQUENCE [GENOMIC DNA]</scope>
    <source>
        <strain>CCUG 2071 / LMG 3368 / NCIMB 8687</strain>
    </source>
</reference>
<gene>
    <name evidence="1" type="primary">pstB</name>
</gene>
<keyword id="KW-0067">ATP-binding</keyword>
<keyword id="KW-0997">Cell inner membrane</keyword>
<keyword id="KW-1003">Cell membrane</keyword>
<keyword id="KW-0472">Membrane</keyword>
<keyword id="KW-0547">Nucleotide-binding</keyword>
<keyword id="KW-0592">Phosphate transport</keyword>
<keyword id="KW-1278">Translocase</keyword>
<keyword id="KW-0813">Transport</keyword>
<name>PSTB_ALCFA</name>